<dbReference type="EC" id="3.4.22.39" evidence="1"/>
<dbReference type="EMBL" id="X02997">
    <property type="protein sequence ID" value="CAA26754.1"/>
    <property type="molecule type" value="Genomic_DNA"/>
</dbReference>
<dbReference type="EMBL" id="V00031">
    <property type="protein sequence ID" value="CAA23412.1"/>
    <property type="molecule type" value="Genomic_DNA"/>
</dbReference>
<dbReference type="EMBL" id="M73260">
    <property type="status" value="NOT_ANNOTATED_CDS"/>
    <property type="molecule type" value="Genomic_DNA"/>
</dbReference>
<dbReference type="PIR" id="C03823">
    <property type="entry name" value="W2AD55"/>
</dbReference>
<dbReference type="RefSeq" id="AP_000212.1">
    <property type="nucleotide sequence ID" value="AC_000008.1"/>
</dbReference>
<dbReference type="SMR" id="P03253"/>
<dbReference type="MEROPS" id="C05.001"/>
<dbReference type="Proteomes" id="UP000004992">
    <property type="component" value="Genome"/>
</dbReference>
<dbReference type="GO" id="GO:0042025">
    <property type="term" value="C:host cell nucleus"/>
    <property type="evidence" value="ECO:0007669"/>
    <property type="project" value="UniProtKB-SubCell"/>
</dbReference>
<dbReference type="GO" id="GO:0044423">
    <property type="term" value="C:virion component"/>
    <property type="evidence" value="ECO:0007669"/>
    <property type="project" value="UniProtKB-UniRule"/>
</dbReference>
<dbReference type="GO" id="GO:0004197">
    <property type="term" value="F:cysteine-type endopeptidase activity"/>
    <property type="evidence" value="ECO:0007669"/>
    <property type="project" value="UniProtKB-UniRule"/>
</dbReference>
<dbReference type="GO" id="GO:0003677">
    <property type="term" value="F:DNA binding"/>
    <property type="evidence" value="ECO:0007669"/>
    <property type="project" value="UniProtKB-UniRule"/>
</dbReference>
<dbReference type="GO" id="GO:0006508">
    <property type="term" value="P:proteolysis"/>
    <property type="evidence" value="ECO:0007669"/>
    <property type="project" value="UniProtKB-KW"/>
</dbReference>
<dbReference type="Gene3D" id="3.40.395.10">
    <property type="entry name" value="Adenoviral Proteinase, Chain A"/>
    <property type="match status" value="1"/>
</dbReference>
<dbReference type="HAMAP" id="MF_04059">
    <property type="entry name" value="ADV_PRO"/>
    <property type="match status" value="1"/>
</dbReference>
<dbReference type="InterPro" id="IPR038765">
    <property type="entry name" value="Papain-like_cys_pep_sf"/>
</dbReference>
<dbReference type="InterPro" id="IPR000855">
    <property type="entry name" value="Peptidase_C5"/>
</dbReference>
<dbReference type="Pfam" id="PF00770">
    <property type="entry name" value="Peptidase_C5"/>
    <property type="match status" value="1"/>
</dbReference>
<dbReference type="PIRSF" id="PIRSF001218">
    <property type="entry name" value="Protease_ADV"/>
    <property type="match status" value="1"/>
</dbReference>
<dbReference type="PRINTS" id="PR00703">
    <property type="entry name" value="ADVENDOPTASE"/>
</dbReference>
<dbReference type="SUPFAM" id="SSF54001">
    <property type="entry name" value="Cysteine proteinases"/>
    <property type="match status" value="1"/>
</dbReference>
<sequence length="204" mass="23068">MGSSEQELKAIVKDLGCGPYFLGTYDKRFPGFVSPHKLACAIVNTAGRETGGVHWMAFAWNPHSKTCYLFEPFGFSDQRLKQVYQFEYESLLRRSAIASSPDRCITLEKSTQSVQGPNSAACGLFCCMFLHAFANWPQTPMDHNPTMNLITGVPNSMLNSPQVQPTLRRNQEQLYSFLERHSPYFRSHSAQIRSATSFCHLKNM</sequence>
<evidence type="ECO:0000255" key="1">
    <source>
        <dbReference type="HAMAP-Rule" id="MF_04059"/>
    </source>
</evidence>
<evidence type="ECO:0000269" key="2">
    <source>
    </source>
</evidence>
<proteinExistence type="evidence at transcript level"/>
<protein>
    <recommendedName>
        <fullName evidence="1">Protease</fullName>
        <ecNumber evidence="1">3.4.22.39</ecNumber>
    </recommendedName>
    <alternativeName>
        <fullName evidence="1">Adenain</fullName>
    </alternativeName>
    <alternativeName>
        <fullName evidence="1">Adenovirus protease</fullName>
        <shortName evidence="1">AVP</shortName>
    </alternativeName>
    <alternativeName>
        <fullName evidence="1">Adenovirus proteinase</fullName>
    </alternativeName>
    <alternativeName>
        <fullName evidence="1">Endoprotease</fullName>
    </alternativeName>
</protein>
<reference key="1">
    <citation type="journal article" date="1980" name="Nucleic Acids Res.">
        <title>Nucleotide sequence analysis of a region of adenovirus 5 DNA encoding a hitherto unidentified gene.</title>
        <authorList>
            <person name="Kruijer W."/>
            <person name="van Schaik F.M.A."/>
            <person name="Sussenbach J.S."/>
        </authorList>
    </citation>
    <scope>NUCLEOTIDE SEQUENCE [GENOMIC DNA]</scope>
</reference>
<reference key="2">
    <citation type="journal article" date="1992" name="Virology">
        <title>The sequence of the genome of adenovirus type 5 and its comparison with the genome of adenovirus type 2.</title>
        <authorList>
            <person name="Chroboczek J."/>
            <person name="Bieber F."/>
            <person name="Jacrot B."/>
        </authorList>
    </citation>
    <scope>NUCLEOTIDE SEQUENCE [GENOMIC DNA]</scope>
</reference>
<reference key="3">
    <citation type="journal article" date="2012" name="Nat. Methods">
        <title>De novo derivation of proteomes from transcriptomes for transcript and protein identification.</title>
        <authorList>
            <person name="Evans V.C."/>
            <person name="Barker G."/>
            <person name="Heesom K.J."/>
            <person name="Fan J."/>
            <person name="Bessant C."/>
            <person name="Matthews D.A."/>
        </authorList>
    </citation>
    <scope>NUCLEOTIDE SEQUENCE [MRNA]</scope>
</reference>
<reference key="4">
    <citation type="journal article" date="2002" name="J. Proteome Res.">
        <title>Analysis of the adenovirus type 5 proteome by liquid chromatography and tandem mass spectrometry methods.</title>
        <authorList>
            <person name="Chelius D."/>
            <person name="Huhmer A.F."/>
            <person name="Shieh C.H."/>
            <person name="Lehmberg E."/>
            <person name="Traina J.A."/>
            <person name="Slattery T.K."/>
            <person name="Pungor E. Jr."/>
        </authorList>
    </citation>
    <scope>SUBCELLULAR LOCATION</scope>
</reference>
<reference key="5">
    <citation type="journal article" date="2012" name="Viruses">
        <title>Latest insights on adenovirus structure and assembly.</title>
        <authorList>
            <person name="San Martin C."/>
        </authorList>
    </citation>
    <scope>REVIEW</scope>
</reference>
<keyword id="KW-0068">Autocatalytic cleavage</keyword>
<keyword id="KW-1015">Disulfide bond</keyword>
<keyword id="KW-0238">DNA-binding</keyword>
<keyword id="KW-1048">Host nucleus</keyword>
<keyword id="KW-0378">Hydrolase</keyword>
<keyword id="KW-0426">Late protein</keyword>
<keyword id="KW-0645">Protease</keyword>
<keyword id="KW-1185">Reference proteome</keyword>
<keyword id="KW-0788">Thiol protease</keyword>
<keyword id="KW-0946">Virion</keyword>
<name>PRO_ADE05</name>
<accession>P03253</accession>
<feature type="chain" id="PRO_0000218026" description="Protease">
    <location>
        <begin position="1"/>
        <end position="204"/>
    </location>
</feature>
<feature type="active site" evidence="1">
    <location>
        <position position="54"/>
    </location>
</feature>
<feature type="active site" evidence="1">
    <location>
        <position position="71"/>
    </location>
</feature>
<feature type="active site" evidence="1">
    <location>
        <position position="122"/>
    </location>
</feature>
<feature type="site" description="Cleavage; by autolysis" evidence="1">
    <location>
        <begin position="51"/>
        <end position="52"/>
    </location>
</feature>
<feature type="disulfide bond" description="Interchain (with C-10 in cleaved protease cofactor pVI-C)" evidence="1">
    <location>
        <position position="104"/>
    </location>
</feature>
<comment type="function">
    <text evidence="1">Cleaves viral precursor proteins (pTP, pIIIa, pVI, pVII, pVIII, and pX) inside newly assembled particles giving rise to mature virions. Protease complexed to its cofactor slides along the viral DNA to specifically locate and cleave the viral precursors. Mature virions have a weakened organization compared to the unmature virions, thereby facilitating subsequent uncoating. Without maturation, the particle lacks infectivity and is unable to uncoat. Late in adenovirus infection, in the cytoplasm, may participate in the cytoskeleton destruction. Cleaves host cell cytoskeletal keratins K7 and K18.</text>
</comment>
<comment type="catalytic activity">
    <reaction evidence="1">
        <text>Cleaves proteins of the adenovirus and its host cell at two consensus sites: -Yaa-Xaa-Gly-Gly-|-Xaa- and -Yaa-Xaa-Gly-Xaa-|-Gly- (in which Yaa is Met, Ile or Leu, and Xaa is any amino acid).</text>
        <dbReference type="EC" id="3.4.22.39"/>
    </reaction>
</comment>
<comment type="activity regulation">
    <text evidence="1">Requires DNA and protease cofactor for maximal activation. Inside nascent virions, becomes partially activated by binding to the viral DNA, allowing it to cleave the cofactor that binds to the protease and fully activates it. Actin, like the viral protease cofactor, seems to act as a cofactor in the cleavage of cytokeratin 18 and of actin itself.</text>
</comment>
<comment type="subunit">
    <text evidence="1">Interacts with protease cofactor pVI-C; this interaction is necessary for protease activation.</text>
</comment>
<comment type="subcellular location">
    <subcellularLocation>
        <location evidence="1 2">Virion</location>
    </subcellularLocation>
    <subcellularLocation>
        <location evidence="1">Host nucleus</location>
    </subcellularLocation>
    <text evidence="1">Present in about 10 copies per virion.</text>
</comment>
<comment type="induction">
    <text evidence="1">Expressed in the late phase of the viral replicative cycle.</text>
</comment>
<comment type="miscellaneous">
    <text evidence="1">All late proteins expressed from the major late promoter are produced by alternative splicing and alternative polyadenylation of the same gene giving rise to non-overlapping ORFs. A leader sequence is present in the N-terminus of all these mRNAs and is recognized by the viral shutoff protein to provide expression although conventional translation via ribosome scanning from the cap has been shut off in the host cell.</text>
</comment>
<comment type="similarity">
    <text evidence="1">Belongs to the peptidase C5 family.</text>
</comment>
<organismHost>
    <name type="scientific">Homo sapiens</name>
    <name type="common">Human</name>
    <dbReference type="NCBI Taxonomy" id="9606"/>
</organismHost>
<organism>
    <name type="scientific">Human adenovirus C serotype 5</name>
    <name type="common">HAdV-5</name>
    <name type="synonym">Human adenovirus 5</name>
    <dbReference type="NCBI Taxonomy" id="28285"/>
    <lineage>
        <taxon>Viruses</taxon>
        <taxon>Varidnaviria</taxon>
        <taxon>Bamfordvirae</taxon>
        <taxon>Preplasmiviricota</taxon>
        <taxon>Tectiliviricetes</taxon>
        <taxon>Rowavirales</taxon>
        <taxon>Adenoviridae</taxon>
        <taxon>Mastadenovirus</taxon>
        <taxon>Human mastadenovirus C</taxon>
    </lineage>
</organism>
<gene>
    <name evidence="1" type="primary">L3</name>
</gene>